<proteinExistence type="evidence at transcript level"/>
<gene>
    <name type="primary">DRD5</name>
    <name type="synonym">DRD1B</name>
</gene>
<comment type="function">
    <text>Dopamine receptor whose activity is mediated by G proteins which activate adenylyl cyclase.</text>
</comment>
<comment type="subcellular location">
    <subcellularLocation>
        <location>Cell membrane</location>
        <topology>Multi-pass membrane protein</topology>
    </subcellularLocation>
</comment>
<comment type="similarity">
    <text evidence="2">Belongs to the G-protein coupled receptor 1 family.</text>
</comment>
<accession>Q95195</accession>
<evidence type="ECO:0000255" key="1"/>
<evidence type="ECO:0000255" key="2">
    <source>
        <dbReference type="PROSITE-ProRule" id="PRU00521"/>
    </source>
</evidence>
<organism>
    <name type="scientific">Macaca mulatta</name>
    <name type="common">Rhesus macaque</name>
    <dbReference type="NCBI Taxonomy" id="9544"/>
    <lineage>
        <taxon>Eukaryota</taxon>
        <taxon>Metazoa</taxon>
        <taxon>Chordata</taxon>
        <taxon>Craniata</taxon>
        <taxon>Vertebrata</taxon>
        <taxon>Euteleostomi</taxon>
        <taxon>Mammalia</taxon>
        <taxon>Eutheria</taxon>
        <taxon>Euarchontoglires</taxon>
        <taxon>Primates</taxon>
        <taxon>Haplorrhini</taxon>
        <taxon>Catarrhini</taxon>
        <taxon>Cercopithecidae</taxon>
        <taxon>Cercopithecinae</taxon>
        <taxon>Macaca</taxon>
    </lineage>
</organism>
<name>DRD5_MACMU</name>
<sequence>SILISFPVQLNWHRDQAGSWGGLDLTNNLANWTPWEEDVWEPDVRAENCDSSLNRTYAISSSLVSFYIPVAIMIVTYTRIYRIAQVQIRRISSLERAAEHAQSCRSSAACAPDTSLRASIKKETKVLKTLSVIMGVFVCCWLPFFIL</sequence>
<reference key="1">
    <citation type="journal article" date="1995" name="Brain Res. Mol. Brain Res.">
        <title>Distribution of dopamine D1, D2, and D5 receptor mRNAs in the monkey brain: ribonuclease protection assay analysis.</title>
        <authorList>
            <person name="Choi W.S."/>
            <person name="Machida C.A."/>
            <person name="Ronnekleiv O.K."/>
        </authorList>
    </citation>
    <scope>NUCLEOTIDE SEQUENCE [MRNA]</scope>
    <source>
        <tissue>Liver</tissue>
    </source>
</reference>
<protein>
    <recommendedName>
        <fullName>D(1B) dopamine receptor</fullName>
    </recommendedName>
    <alternativeName>
        <fullName>D(5) dopamine receptor</fullName>
    </alternativeName>
    <alternativeName>
        <fullName>Dopamine D5 receptor</fullName>
    </alternativeName>
</protein>
<keyword id="KW-1003">Cell membrane</keyword>
<keyword id="KW-0297">G-protein coupled receptor</keyword>
<keyword id="KW-0325">Glycoprotein</keyword>
<keyword id="KW-0472">Membrane</keyword>
<keyword id="KW-0675">Receptor</keyword>
<keyword id="KW-1185">Reference proteome</keyword>
<keyword id="KW-0807">Transducer</keyword>
<keyword id="KW-0812">Transmembrane</keyword>
<keyword id="KW-1133">Transmembrane helix</keyword>
<dbReference type="EMBL" id="U13758">
    <property type="protein sequence ID" value="AAB40359.1"/>
    <property type="molecule type" value="mRNA"/>
</dbReference>
<dbReference type="SMR" id="Q95195"/>
<dbReference type="STRING" id="9544.ENSMMUP00000003732"/>
<dbReference type="GlyCosmos" id="Q95195">
    <property type="glycosylation" value="1 site, No reported glycans"/>
</dbReference>
<dbReference type="PaxDb" id="9544-ENSMMUP00000003732"/>
<dbReference type="eggNOG" id="KOG3656">
    <property type="taxonomic scope" value="Eukaryota"/>
</dbReference>
<dbReference type="InParanoid" id="Q95195"/>
<dbReference type="Proteomes" id="UP000006718">
    <property type="component" value="Unassembled WGS sequence"/>
</dbReference>
<dbReference type="GO" id="GO:0042734">
    <property type="term" value="C:presynaptic membrane"/>
    <property type="evidence" value="ECO:0000314"/>
    <property type="project" value="SynGO"/>
</dbReference>
<dbReference type="GO" id="GO:0004930">
    <property type="term" value="F:G protein-coupled receptor activity"/>
    <property type="evidence" value="ECO:0007669"/>
    <property type="project" value="UniProtKB-KW"/>
</dbReference>
<dbReference type="Gene3D" id="1.20.1070.10">
    <property type="entry name" value="Rhodopsin 7-helix transmembrane proteins"/>
    <property type="match status" value="1"/>
</dbReference>
<dbReference type="InterPro" id="IPR000276">
    <property type="entry name" value="GPCR_Rhodpsn"/>
</dbReference>
<dbReference type="InterPro" id="IPR017452">
    <property type="entry name" value="GPCR_Rhodpsn_7TM"/>
</dbReference>
<dbReference type="PANTHER" id="PTHR24248">
    <property type="entry name" value="ADRENERGIC RECEPTOR-RELATED G-PROTEIN COUPLED RECEPTOR"/>
    <property type="match status" value="1"/>
</dbReference>
<dbReference type="PANTHER" id="PTHR24248:SF136">
    <property type="entry name" value="D(1B) DOPAMINE RECEPTOR"/>
    <property type="match status" value="1"/>
</dbReference>
<dbReference type="Pfam" id="PF00001">
    <property type="entry name" value="7tm_1"/>
    <property type="match status" value="1"/>
</dbReference>
<dbReference type="PRINTS" id="PR00237">
    <property type="entry name" value="GPCRRHODOPSN"/>
</dbReference>
<dbReference type="SUPFAM" id="SSF81321">
    <property type="entry name" value="Family A G protein-coupled receptor-like"/>
    <property type="match status" value="1"/>
</dbReference>
<dbReference type="PROSITE" id="PS50262">
    <property type="entry name" value="G_PROTEIN_RECEP_F1_2"/>
    <property type="match status" value="1"/>
</dbReference>
<feature type="chain" id="PRO_0000069406" description="D(1B) dopamine receptor">
    <location>
        <begin position="1" status="less than"/>
        <end position="147" status="greater than"/>
    </location>
</feature>
<feature type="transmembrane region" description="Helical; Name=4" evidence="1">
    <location>
        <begin position="1" status="less than"/>
        <end position="12"/>
    </location>
</feature>
<feature type="topological domain" description="Extracellular" evidence="1">
    <location>
        <begin position="13"/>
        <end position="55"/>
    </location>
</feature>
<feature type="transmembrane region" description="Helical; Name=5" evidence="1">
    <location>
        <begin position="56"/>
        <end position="78"/>
    </location>
</feature>
<feature type="topological domain" description="Cytoplasmic" evidence="1">
    <location>
        <begin position="79"/>
        <end position="128"/>
    </location>
</feature>
<feature type="transmembrane region" description="Helical; Name=6" evidence="1">
    <location>
        <begin position="129"/>
        <end position="147" status="greater than"/>
    </location>
</feature>
<feature type="glycosylation site" description="N-linked (GlcNAc...) asparagine" evidence="1">
    <location>
        <position position="54"/>
    </location>
</feature>
<feature type="non-terminal residue">
    <location>
        <position position="1"/>
    </location>
</feature>
<feature type="non-terminal residue">
    <location>
        <position position="147"/>
    </location>
</feature>